<protein>
    <recommendedName>
        <fullName>Protein NAG1</fullName>
    </recommendedName>
    <alternativeName>
        <fullName>Nested antisense gene 1 protein</fullName>
    </alternativeName>
</protein>
<organism>
    <name type="scientific">Saccharomyces cerevisiae (strain ATCC 204508 / S288c)</name>
    <name type="common">Baker's yeast</name>
    <dbReference type="NCBI Taxonomy" id="559292"/>
    <lineage>
        <taxon>Eukaryota</taxon>
        <taxon>Fungi</taxon>
        <taxon>Dikarya</taxon>
        <taxon>Ascomycota</taxon>
        <taxon>Saccharomycotina</taxon>
        <taxon>Saccharomycetes</taxon>
        <taxon>Saccharomycetales</taxon>
        <taxon>Saccharomycetaceae</taxon>
        <taxon>Saccharomyces</taxon>
    </lineage>
</organism>
<comment type="function">
    <text evidence="2">Involved in yeast cell wall biogenesis.</text>
</comment>
<comment type="subcellular location">
    <subcellularLocation>
        <location evidence="3">Membrane</location>
        <topology evidence="3">Single-pass membrane protein</topology>
    </subcellularLocation>
    <text evidence="2">Localizes to the cell periphery under conditions of vegetative growth.</text>
</comment>
<comment type="induction">
    <text evidence="2">Expression is dependent upon the presence of the cell wall integrity pathway mitogen-activated protein kinase SLT2 and its downstream transcription factor RLM1.</text>
</comment>
<comment type="disruption phenotype">
    <text evidence="2">Hypersensitive to cell wall-perturbing agent calcofluor white (CFW) at 37 degrees Celsius. A similar phenotype is observed at 30 degrees Celsius, although the severity is decreased. Decreased expression of genes contributing to cell wall organization during vegetative growth.</text>
</comment>
<comment type="caution">
    <text evidence="3">Overlaps completely with ORF YGR031W.</text>
</comment>
<dbReference type="EMBL" id="DQ115390">
    <property type="protein sequence ID" value="AAZ22446.1"/>
    <property type="molecule type" value="Genomic_DNA"/>
</dbReference>
<dbReference type="EMBL" id="Z72816">
    <property type="status" value="NOT_ANNOTATED_CDS"/>
    <property type="molecule type" value="Genomic_DNA"/>
</dbReference>
<dbReference type="EMBL" id="AF479950">
    <property type="protein sequence ID" value="AAL79263.1"/>
    <property type="molecule type" value="Genomic_DNA"/>
</dbReference>
<dbReference type="EMBL" id="BK006941">
    <property type="protein sequence ID" value="DAA08128.1"/>
    <property type="molecule type" value="Genomic_DNA"/>
</dbReference>
<dbReference type="RefSeq" id="NP_001027023.1">
    <property type="nucleotide sequence ID" value="NM_001184658.1"/>
</dbReference>
<dbReference type="FunCoup" id="Q8TGN9">
    <property type="interactions" value="15"/>
</dbReference>
<dbReference type="STRING" id="4932.YGR031C-A"/>
<dbReference type="PaxDb" id="4932-YGR031C-A"/>
<dbReference type="EnsemblFungi" id="YGR031C-A_mRNA">
    <property type="protein sequence ID" value="YGR031C-A"/>
    <property type="gene ID" value="YGR031C-A"/>
</dbReference>
<dbReference type="GeneID" id="8656591"/>
<dbReference type="KEGG" id="sce:YGR031C-A"/>
<dbReference type="AGR" id="SGD:S000028636"/>
<dbReference type="SGD" id="S000028636">
    <property type="gene designation" value="NAG1"/>
</dbReference>
<dbReference type="VEuPathDB" id="FungiDB:YGR031C-A"/>
<dbReference type="HOGENOM" id="CLU_1628025_0_0_1"/>
<dbReference type="InParanoid" id="Q8TGN9"/>
<dbReference type="OrthoDB" id="10294438at2759"/>
<dbReference type="BioCyc" id="YEAST:G3O-31015-MONOMER"/>
<dbReference type="BioGRID-ORCS" id="8656591">
    <property type="hits" value="10 hits in 10 CRISPR screens"/>
</dbReference>
<dbReference type="PRO" id="PR:Q8TGN9"/>
<dbReference type="Proteomes" id="UP000002311">
    <property type="component" value="Chromosome VII"/>
</dbReference>
<dbReference type="RNAct" id="Q8TGN9">
    <property type="molecule type" value="protein"/>
</dbReference>
<dbReference type="GO" id="GO:0071944">
    <property type="term" value="C:cell periphery"/>
    <property type="evidence" value="ECO:0007005"/>
    <property type="project" value="SGD"/>
</dbReference>
<dbReference type="GO" id="GO:0005886">
    <property type="term" value="C:plasma membrane"/>
    <property type="evidence" value="ECO:0000314"/>
    <property type="project" value="SGD"/>
</dbReference>
<dbReference type="GO" id="GO:0042546">
    <property type="term" value="P:cell wall biogenesis"/>
    <property type="evidence" value="ECO:0000315"/>
    <property type="project" value="SGD"/>
</dbReference>
<dbReference type="GO" id="GO:0071555">
    <property type="term" value="P:cell wall organization"/>
    <property type="evidence" value="ECO:0007669"/>
    <property type="project" value="UniProtKB-KW"/>
</dbReference>
<evidence type="ECO:0000255" key="1"/>
<evidence type="ECO:0000269" key="2">
    <source>
    </source>
</evidence>
<evidence type="ECO:0000305" key="3"/>
<gene>
    <name type="primary">NAG1</name>
    <name type="ordered locus">YGR031C-A</name>
</gene>
<proteinExistence type="evidence at transcript level"/>
<name>NAG1_YEAST</name>
<accession>Q8TGN9</accession>
<accession>D6VUG7</accession>
<reference key="1">
    <citation type="journal article" date="2005" name="Nat. Genet.">
        <title>Quantitative trait loci mapped to single-nucleotide resolution in yeast.</title>
        <authorList>
            <person name="Deutschbauer A.M."/>
            <person name="Davis R.W."/>
        </authorList>
    </citation>
    <scope>NUCLEOTIDE SEQUENCE [GENOMIC DNA]</scope>
    <source>
        <strain>SK1</strain>
    </source>
</reference>
<reference key="2">
    <citation type="journal article" date="1997" name="Nature">
        <title>The nucleotide sequence of Saccharomyces cerevisiae chromosome VII.</title>
        <authorList>
            <person name="Tettelin H."/>
            <person name="Agostoni-Carbone M.L."/>
            <person name="Albermann K."/>
            <person name="Albers M."/>
            <person name="Arroyo J."/>
            <person name="Backes U."/>
            <person name="Barreiros T."/>
            <person name="Bertani I."/>
            <person name="Bjourson A.J."/>
            <person name="Brueckner M."/>
            <person name="Bruschi C.V."/>
            <person name="Carignani G."/>
            <person name="Castagnoli L."/>
            <person name="Cerdan E."/>
            <person name="Clemente M.L."/>
            <person name="Coblenz A."/>
            <person name="Coglievina M."/>
            <person name="Coissac E."/>
            <person name="Defoor E."/>
            <person name="Del Bino S."/>
            <person name="Delius H."/>
            <person name="Delneri D."/>
            <person name="de Wergifosse P."/>
            <person name="Dujon B."/>
            <person name="Durand P."/>
            <person name="Entian K.-D."/>
            <person name="Eraso P."/>
            <person name="Escribano V."/>
            <person name="Fabiani L."/>
            <person name="Fartmann B."/>
            <person name="Feroli F."/>
            <person name="Feuermann M."/>
            <person name="Frontali L."/>
            <person name="Garcia-Gonzalez M."/>
            <person name="Garcia-Saez M.I."/>
            <person name="Goffeau A."/>
            <person name="Guerreiro P."/>
            <person name="Hani J."/>
            <person name="Hansen M."/>
            <person name="Hebling U."/>
            <person name="Hernandez K."/>
            <person name="Heumann K."/>
            <person name="Hilger F."/>
            <person name="Hofmann B."/>
            <person name="Indge K.J."/>
            <person name="James C.M."/>
            <person name="Klima R."/>
            <person name="Koetter P."/>
            <person name="Kramer B."/>
            <person name="Kramer W."/>
            <person name="Lauquin G."/>
            <person name="Leuther H."/>
            <person name="Louis E.J."/>
            <person name="Maillier E."/>
            <person name="Marconi A."/>
            <person name="Martegani E."/>
            <person name="Mazon M.J."/>
            <person name="Mazzoni C."/>
            <person name="McReynolds A.D.K."/>
            <person name="Melchioretto P."/>
            <person name="Mewes H.-W."/>
            <person name="Minenkova O."/>
            <person name="Mueller-Auer S."/>
            <person name="Nawrocki A."/>
            <person name="Netter P."/>
            <person name="Neu R."/>
            <person name="Nombela C."/>
            <person name="Oliver S.G."/>
            <person name="Panzeri L."/>
            <person name="Paoluzi S."/>
            <person name="Plevani P."/>
            <person name="Portetelle D."/>
            <person name="Portillo F."/>
            <person name="Potier S."/>
            <person name="Purnelle B."/>
            <person name="Rieger M."/>
            <person name="Riles L."/>
            <person name="Rinaldi T."/>
            <person name="Robben J."/>
            <person name="Rodrigues-Pousada C."/>
            <person name="Rodriguez-Belmonte E."/>
            <person name="Rodriguez-Torres A.M."/>
            <person name="Rose M."/>
            <person name="Ruzzi M."/>
            <person name="Saliola M."/>
            <person name="Sanchez-Perez M."/>
            <person name="Schaefer B."/>
            <person name="Schaefer M."/>
            <person name="Scharfe M."/>
            <person name="Schmidheini T."/>
            <person name="Schreer A."/>
            <person name="Skala J."/>
            <person name="Souciet J.-L."/>
            <person name="Steensma H.Y."/>
            <person name="Talla E."/>
            <person name="Thierry A."/>
            <person name="Vandenbol M."/>
            <person name="van der Aart Q.J.M."/>
            <person name="Van Dyck L."/>
            <person name="Vanoni M."/>
            <person name="Verhasselt P."/>
            <person name="Voet M."/>
            <person name="Volckaert G."/>
            <person name="Wambutt R."/>
            <person name="Watson M.D."/>
            <person name="Weber N."/>
            <person name="Wedler E."/>
            <person name="Wedler H."/>
            <person name="Wipfli P."/>
            <person name="Wolf K."/>
            <person name="Wright L.F."/>
            <person name="Zaccaria P."/>
            <person name="Zimmermann M."/>
            <person name="Zollner A."/>
            <person name="Kleine K."/>
        </authorList>
    </citation>
    <scope>NUCLEOTIDE SEQUENCE [LARGE SCALE GENOMIC DNA]</scope>
    <source>
        <strain>ATCC 204508 / S288c</strain>
    </source>
</reference>
<reference key="3">
    <citation type="journal article" date="2014" name="G3 (Bethesda)">
        <title>The reference genome sequence of Saccharomyces cerevisiae: Then and now.</title>
        <authorList>
            <person name="Engel S.R."/>
            <person name="Dietrich F.S."/>
            <person name="Fisk D.G."/>
            <person name="Binkley G."/>
            <person name="Balakrishnan R."/>
            <person name="Costanzo M.C."/>
            <person name="Dwight S.S."/>
            <person name="Hitz B.C."/>
            <person name="Karra K."/>
            <person name="Nash R.S."/>
            <person name="Weng S."/>
            <person name="Wong E.D."/>
            <person name="Lloyd P."/>
            <person name="Skrzypek M.S."/>
            <person name="Miyasato S.R."/>
            <person name="Simison M."/>
            <person name="Cherry J.M."/>
        </authorList>
    </citation>
    <scope>GENOME REANNOTATION</scope>
    <source>
        <strain>ATCC 204508 / S288c</strain>
    </source>
</reference>
<reference key="4">
    <citation type="journal article" date="2002" name="Nat. Biotechnol.">
        <title>An integrated approach for finding overlooked genes in yeast.</title>
        <authorList>
            <person name="Kumar A."/>
            <person name="Harrison P.M."/>
            <person name="Cheung K.-H."/>
            <person name="Lan N."/>
            <person name="Echols N."/>
            <person name="Bertone P."/>
            <person name="Miller P."/>
            <person name="Gerstein M.B."/>
            <person name="Snyder M."/>
        </authorList>
    </citation>
    <scope>NUCLEOTIDE SEQUENCE [GENOMIC DNA]</scope>
</reference>
<reference key="5">
    <citation type="journal article" date="2008" name="Eukaryot. Cell">
        <title>Unconventional genomic architecture in the budding yeast Saccharomyces cerevisiae masks the nested antisense gene NAG1.</title>
        <authorList>
            <person name="Ma J."/>
            <person name="Dobry C.J."/>
            <person name="Krysan D.J."/>
            <person name="Kumar A."/>
        </authorList>
    </citation>
    <scope>IDENTIFICATION</scope>
    <scope>FUNCTION</scope>
    <scope>SUBCELLULAR LOCATION</scope>
    <scope>INDUCTION</scope>
    <scope>DISRUPTION PHENOTYPE</scope>
</reference>
<sequence length="163" mass="17536">MNSAGRVHRSRAGSRGHAAISPLTMASFSVARGIRSSNVYDDTDDELSILTFFSAVRRNRLTSSLPPILSARCSSACFSVRIVLPLSLTISISALMYSTNSALGRKLTGAFSIQTNIEQSCGFFRTSIMATLPPIECPIIIGPPLVFNSCFVIKCFTSSDMTS</sequence>
<keyword id="KW-0961">Cell wall biogenesis/degradation</keyword>
<keyword id="KW-0472">Membrane</keyword>
<keyword id="KW-1185">Reference proteome</keyword>
<keyword id="KW-0812">Transmembrane</keyword>
<keyword id="KW-1133">Transmembrane helix</keyword>
<feature type="chain" id="PRO_0000299922" description="Protein NAG1">
    <location>
        <begin position="1"/>
        <end position="163"/>
    </location>
</feature>
<feature type="transmembrane region" description="Helical" evidence="1">
    <location>
        <begin position="76"/>
        <end position="96"/>
    </location>
</feature>